<dbReference type="EMBL" id="X71062">
    <property type="protein sequence ID" value="CAA50383.1"/>
    <property type="molecule type" value="Genomic_DNA"/>
</dbReference>
<dbReference type="PIR" id="S39879">
    <property type="entry name" value="S39879"/>
</dbReference>
<dbReference type="RefSeq" id="WP_011554097.1">
    <property type="nucleotide sequence ID" value="NZ_JABFNQ010000003.1"/>
</dbReference>
<dbReference type="PDB" id="2KSS">
    <property type="method" value="NMR"/>
    <property type="chains" value="A=1-86"/>
</dbReference>
<dbReference type="PDBsum" id="2KSS"/>
<dbReference type="BMRB" id="Q06911"/>
<dbReference type="SMR" id="Q06911"/>
<dbReference type="OMA" id="VIPYSED"/>
<dbReference type="EvolutionaryTrace" id="Q06911"/>
<dbReference type="GO" id="GO:0016117">
    <property type="term" value="P:carotenoid biosynthetic process"/>
    <property type="evidence" value="ECO:0007669"/>
    <property type="project" value="UniProtKB-KW"/>
</dbReference>
<dbReference type="CDD" id="cd12840">
    <property type="entry name" value="CarS"/>
    <property type="match status" value="1"/>
</dbReference>
<dbReference type="Gene3D" id="2.30.30.630">
    <property type="match status" value="1"/>
</dbReference>
<dbReference type="InterPro" id="IPR033807">
    <property type="entry name" value="CarS_antirepressor"/>
</dbReference>
<dbReference type="InterPro" id="IPR041199">
    <property type="entry name" value="CarS_SH3"/>
</dbReference>
<dbReference type="Pfam" id="PF18354">
    <property type="entry name" value="SH3_18"/>
    <property type="match status" value="1"/>
</dbReference>
<evidence type="ECO:0000269" key="1">
    <source>
    </source>
</evidence>
<evidence type="ECO:0000269" key="2">
    <source>
    </source>
</evidence>
<evidence type="ECO:0000269" key="3">
    <source>
    </source>
</evidence>
<evidence type="ECO:0007829" key="4">
    <source>
        <dbReference type="PDB" id="2KSS"/>
    </source>
</evidence>
<accession>Q06911</accession>
<sequence>MIQDPSLIICHDVDGAPVRIGAKVKVVPHSEDGTISQRFLGQTGIVVGLVFDDPATQYPDDPLIQVLVEGLGEDLFFPEELELAPEWARNRIAQHRQAVRTGGRSSLERLP</sequence>
<proteinExistence type="evidence at protein level"/>
<feature type="chain" id="PRO_0000089321" description="Antirepressor protein CarS">
    <location>
        <begin position="1"/>
        <end position="111"/>
    </location>
</feature>
<feature type="strand" evidence="4">
    <location>
        <begin position="23"/>
        <end position="25"/>
    </location>
</feature>
<feature type="strand" evidence="4">
    <location>
        <begin position="31"/>
        <end position="33"/>
    </location>
</feature>
<feature type="turn" evidence="4">
    <location>
        <begin position="37"/>
        <end position="41"/>
    </location>
</feature>
<feature type="strand" evidence="4">
    <location>
        <begin position="43"/>
        <end position="48"/>
    </location>
</feature>
<feature type="strand" evidence="4">
    <location>
        <begin position="58"/>
        <end position="63"/>
    </location>
</feature>
<feature type="strand" evidence="4">
    <location>
        <begin position="65"/>
        <end position="68"/>
    </location>
</feature>
<feature type="strand" evidence="4">
    <location>
        <begin position="73"/>
        <end position="75"/>
    </location>
</feature>
<feature type="turn" evidence="4">
    <location>
        <begin position="78"/>
        <end position="80"/>
    </location>
</feature>
<feature type="strand" evidence="4">
    <location>
        <begin position="81"/>
        <end position="83"/>
    </location>
</feature>
<comment type="function">
    <text evidence="1 2">Involved in carotenoid biosynthesis. Antagonizes the transcriptional repressor proteins CarA and CarH by preventing their binding to DNA. Can also dissociate preformed CarA-DNA complexes. Does not bind DNA.</text>
</comment>
<comment type="subunit">
    <text evidence="1 2">Monomer. Interacts with CarA and CarH.</text>
</comment>
<comment type="induction">
    <text evidence="3">By light.</text>
</comment>
<reference key="1">
    <citation type="journal article" date="1993" name="Mol. Microbiol.">
        <title>Light-induced carotenogenesis in Myxococcus xanthus: DNA sequence analysis of the carR region.</title>
        <authorList>
            <person name="McGowan S.J."/>
            <person name="Gorham H.C."/>
            <person name="Hodgson D.A."/>
        </authorList>
    </citation>
    <scope>NUCLEOTIDE SEQUENCE [GENOMIC DNA]</scope>
    <scope>INDUCTION</scope>
    <source>
        <strain>DK101</strain>
    </source>
</reference>
<reference key="2">
    <citation type="journal article" date="2002" name="J. Biol. Chem.">
        <title>A repressor-antirepressor pair links two loci controlling light-induced carotenogenesis in Myxococcus xanthus.</title>
        <authorList>
            <person name="Lopez-Rubio J.J."/>
            <person name="Elias-Arnanz M."/>
            <person name="Padmanabhan S."/>
            <person name="Murillo F.J."/>
        </authorList>
    </citation>
    <scope>FUNCTION</scope>
    <scope>SUBUNIT</scope>
    <scope>INTERACTION WITH CARA</scope>
    <source>
        <strain>DK1050</strain>
    </source>
</reference>
<reference key="3">
    <citation type="journal article" date="2008" name="Mol. Microbiol.">
        <title>Vitamin B12 partners the CarH repressor to downregulate a photoinducible promoter in Myxococcus xanthus.</title>
        <authorList>
            <person name="Perez-Marin M.C."/>
            <person name="Padmanabhan S."/>
            <person name="Polanco M.C."/>
            <person name="Murillo F.J."/>
            <person name="Elias-Arnanz M."/>
        </authorList>
    </citation>
    <scope>FUNCTION</scope>
    <scope>INTERACTION WITH CARH</scope>
    <source>
        <strain>DK1050</strain>
    </source>
</reference>
<keyword id="KW-0002">3D-structure</keyword>
<keyword id="KW-0010">Activator</keyword>
<keyword id="KW-0125">Carotenoid biosynthesis</keyword>
<keyword id="KW-0804">Transcription</keyword>
<keyword id="KW-0805">Transcription regulation</keyword>
<gene>
    <name type="primary">carS</name>
</gene>
<name>CARS_MYXXA</name>
<organism>
    <name type="scientific">Myxococcus xanthus</name>
    <dbReference type="NCBI Taxonomy" id="34"/>
    <lineage>
        <taxon>Bacteria</taxon>
        <taxon>Pseudomonadati</taxon>
        <taxon>Myxococcota</taxon>
        <taxon>Myxococcia</taxon>
        <taxon>Myxococcales</taxon>
        <taxon>Cystobacterineae</taxon>
        <taxon>Myxococcaceae</taxon>
        <taxon>Myxococcus</taxon>
    </lineage>
</organism>
<protein>
    <recommendedName>
        <fullName>Antirepressor protein CarS</fullName>
    </recommendedName>
</protein>